<dbReference type="EC" id="2.7.7.8" evidence="1"/>
<dbReference type="EMBL" id="CP000382">
    <property type="protein sequence ID" value="ABK60980.1"/>
    <property type="molecule type" value="Genomic_DNA"/>
</dbReference>
<dbReference type="RefSeq" id="WP_011722203.1">
    <property type="nucleotide sequence ID" value="NC_008593.1"/>
</dbReference>
<dbReference type="SMR" id="A0Q0Q1"/>
<dbReference type="STRING" id="386415.NT01CX_2130"/>
<dbReference type="KEGG" id="cno:NT01CX_2130"/>
<dbReference type="PATRIC" id="fig|386415.7.peg.1235"/>
<dbReference type="eggNOG" id="COG1185">
    <property type="taxonomic scope" value="Bacteria"/>
</dbReference>
<dbReference type="HOGENOM" id="CLU_004217_2_2_9"/>
<dbReference type="Proteomes" id="UP000008220">
    <property type="component" value="Chromosome"/>
</dbReference>
<dbReference type="GO" id="GO:0005829">
    <property type="term" value="C:cytosol"/>
    <property type="evidence" value="ECO:0007669"/>
    <property type="project" value="TreeGrafter"/>
</dbReference>
<dbReference type="GO" id="GO:0000175">
    <property type="term" value="F:3'-5'-RNA exonuclease activity"/>
    <property type="evidence" value="ECO:0007669"/>
    <property type="project" value="TreeGrafter"/>
</dbReference>
<dbReference type="GO" id="GO:0000287">
    <property type="term" value="F:magnesium ion binding"/>
    <property type="evidence" value="ECO:0007669"/>
    <property type="project" value="UniProtKB-UniRule"/>
</dbReference>
<dbReference type="GO" id="GO:0004654">
    <property type="term" value="F:polyribonucleotide nucleotidyltransferase activity"/>
    <property type="evidence" value="ECO:0007669"/>
    <property type="project" value="UniProtKB-UniRule"/>
</dbReference>
<dbReference type="GO" id="GO:0003723">
    <property type="term" value="F:RNA binding"/>
    <property type="evidence" value="ECO:0007669"/>
    <property type="project" value="UniProtKB-UniRule"/>
</dbReference>
<dbReference type="GO" id="GO:0006402">
    <property type="term" value="P:mRNA catabolic process"/>
    <property type="evidence" value="ECO:0007669"/>
    <property type="project" value="UniProtKB-UniRule"/>
</dbReference>
<dbReference type="GO" id="GO:0006396">
    <property type="term" value="P:RNA processing"/>
    <property type="evidence" value="ECO:0007669"/>
    <property type="project" value="InterPro"/>
</dbReference>
<dbReference type="CDD" id="cd02393">
    <property type="entry name" value="KH-I_PNPase"/>
    <property type="match status" value="1"/>
</dbReference>
<dbReference type="CDD" id="cd11363">
    <property type="entry name" value="RNase_PH_PNPase_1"/>
    <property type="match status" value="1"/>
</dbReference>
<dbReference type="CDD" id="cd11364">
    <property type="entry name" value="RNase_PH_PNPase_2"/>
    <property type="match status" value="1"/>
</dbReference>
<dbReference type="CDD" id="cd04472">
    <property type="entry name" value="S1_PNPase"/>
    <property type="match status" value="1"/>
</dbReference>
<dbReference type="FunFam" id="2.40.50.140:FF:000023">
    <property type="entry name" value="Polyribonucleotide nucleotidyltransferase"/>
    <property type="match status" value="1"/>
</dbReference>
<dbReference type="FunFam" id="3.30.1370.10:FF:000001">
    <property type="entry name" value="Polyribonucleotide nucleotidyltransferase"/>
    <property type="match status" value="1"/>
</dbReference>
<dbReference type="FunFam" id="3.30.230.70:FF:000001">
    <property type="entry name" value="Polyribonucleotide nucleotidyltransferase"/>
    <property type="match status" value="1"/>
</dbReference>
<dbReference type="FunFam" id="3.30.230.70:FF:000002">
    <property type="entry name" value="Polyribonucleotide nucleotidyltransferase"/>
    <property type="match status" value="1"/>
</dbReference>
<dbReference type="Gene3D" id="3.30.230.70">
    <property type="entry name" value="GHMP Kinase, N-terminal domain"/>
    <property type="match status" value="2"/>
</dbReference>
<dbReference type="Gene3D" id="3.30.1370.10">
    <property type="entry name" value="K Homology domain, type 1"/>
    <property type="match status" value="1"/>
</dbReference>
<dbReference type="Gene3D" id="2.40.50.140">
    <property type="entry name" value="Nucleic acid-binding proteins"/>
    <property type="match status" value="1"/>
</dbReference>
<dbReference type="HAMAP" id="MF_01595">
    <property type="entry name" value="PNPase"/>
    <property type="match status" value="1"/>
</dbReference>
<dbReference type="InterPro" id="IPR001247">
    <property type="entry name" value="ExoRNase_PH_dom1"/>
</dbReference>
<dbReference type="InterPro" id="IPR015847">
    <property type="entry name" value="ExoRNase_PH_dom2"/>
</dbReference>
<dbReference type="InterPro" id="IPR036345">
    <property type="entry name" value="ExoRNase_PH_dom2_sf"/>
</dbReference>
<dbReference type="InterPro" id="IPR004087">
    <property type="entry name" value="KH_dom"/>
</dbReference>
<dbReference type="InterPro" id="IPR004088">
    <property type="entry name" value="KH_dom_type_1"/>
</dbReference>
<dbReference type="InterPro" id="IPR036612">
    <property type="entry name" value="KH_dom_type_1_sf"/>
</dbReference>
<dbReference type="InterPro" id="IPR012340">
    <property type="entry name" value="NA-bd_OB-fold"/>
</dbReference>
<dbReference type="InterPro" id="IPR012162">
    <property type="entry name" value="PNPase"/>
</dbReference>
<dbReference type="InterPro" id="IPR027408">
    <property type="entry name" value="PNPase/RNase_PH_dom_sf"/>
</dbReference>
<dbReference type="InterPro" id="IPR015848">
    <property type="entry name" value="PNPase_PH_RNA-bd_bac/org-type"/>
</dbReference>
<dbReference type="InterPro" id="IPR036456">
    <property type="entry name" value="PNPase_PH_RNA-bd_sf"/>
</dbReference>
<dbReference type="InterPro" id="IPR020568">
    <property type="entry name" value="Ribosomal_Su5_D2-typ_SF"/>
</dbReference>
<dbReference type="InterPro" id="IPR003029">
    <property type="entry name" value="S1_domain"/>
</dbReference>
<dbReference type="NCBIfam" id="TIGR03591">
    <property type="entry name" value="polynuc_phos"/>
    <property type="match status" value="1"/>
</dbReference>
<dbReference type="NCBIfam" id="NF008805">
    <property type="entry name" value="PRK11824.1"/>
    <property type="match status" value="1"/>
</dbReference>
<dbReference type="PANTHER" id="PTHR11252">
    <property type="entry name" value="POLYRIBONUCLEOTIDE NUCLEOTIDYLTRANSFERASE"/>
    <property type="match status" value="1"/>
</dbReference>
<dbReference type="PANTHER" id="PTHR11252:SF0">
    <property type="entry name" value="POLYRIBONUCLEOTIDE NUCLEOTIDYLTRANSFERASE 1, MITOCHONDRIAL"/>
    <property type="match status" value="1"/>
</dbReference>
<dbReference type="Pfam" id="PF00013">
    <property type="entry name" value="KH_1"/>
    <property type="match status" value="1"/>
</dbReference>
<dbReference type="Pfam" id="PF03726">
    <property type="entry name" value="PNPase"/>
    <property type="match status" value="1"/>
</dbReference>
<dbReference type="Pfam" id="PF01138">
    <property type="entry name" value="RNase_PH"/>
    <property type="match status" value="2"/>
</dbReference>
<dbReference type="Pfam" id="PF03725">
    <property type="entry name" value="RNase_PH_C"/>
    <property type="match status" value="1"/>
</dbReference>
<dbReference type="Pfam" id="PF00575">
    <property type="entry name" value="S1"/>
    <property type="match status" value="1"/>
</dbReference>
<dbReference type="PIRSF" id="PIRSF005499">
    <property type="entry name" value="PNPase"/>
    <property type="match status" value="1"/>
</dbReference>
<dbReference type="SMART" id="SM00322">
    <property type="entry name" value="KH"/>
    <property type="match status" value="1"/>
</dbReference>
<dbReference type="SMART" id="SM00316">
    <property type="entry name" value="S1"/>
    <property type="match status" value="1"/>
</dbReference>
<dbReference type="SUPFAM" id="SSF54791">
    <property type="entry name" value="Eukaryotic type KH-domain (KH-domain type I)"/>
    <property type="match status" value="1"/>
</dbReference>
<dbReference type="SUPFAM" id="SSF50249">
    <property type="entry name" value="Nucleic acid-binding proteins"/>
    <property type="match status" value="1"/>
</dbReference>
<dbReference type="SUPFAM" id="SSF46915">
    <property type="entry name" value="Polynucleotide phosphorylase/guanosine pentaphosphate synthase (PNPase/GPSI), domain 3"/>
    <property type="match status" value="1"/>
</dbReference>
<dbReference type="SUPFAM" id="SSF55666">
    <property type="entry name" value="Ribonuclease PH domain 2-like"/>
    <property type="match status" value="2"/>
</dbReference>
<dbReference type="SUPFAM" id="SSF54211">
    <property type="entry name" value="Ribosomal protein S5 domain 2-like"/>
    <property type="match status" value="2"/>
</dbReference>
<dbReference type="PROSITE" id="PS50084">
    <property type="entry name" value="KH_TYPE_1"/>
    <property type="match status" value="1"/>
</dbReference>
<dbReference type="PROSITE" id="PS50126">
    <property type="entry name" value="S1"/>
    <property type="match status" value="1"/>
</dbReference>
<accession>A0Q0Q1</accession>
<protein>
    <recommendedName>
        <fullName evidence="1">Polyribonucleotide nucleotidyltransferase</fullName>
        <ecNumber evidence="1">2.7.7.8</ecNumber>
    </recommendedName>
    <alternativeName>
        <fullName evidence="1">Polynucleotide phosphorylase</fullName>
        <shortName evidence="1">PNPase</shortName>
    </alternativeName>
</protein>
<keyword id="KW-0963">Cytoplasm</keyword>
<keyword id="KW-0460">Magnesium</keyword>
<keyword id="KW-0479">Metal-binding</keyword>
<keyword id="KW-0548">Nucleotidyltransferase</keyword>
<keyword id="KW-1185">Reference proteome</keyword>
<keyword id="KW-0694">RNA-binding</keyword>
<keyword id="KW-0808">Transferase</keyword>
<evidence type="ECO:0000255" key="1">
    <source>
        <dbReference type="HAMAP-Rule" id="MF_01595"/>
    </source>
</evidence>
<sequence>MNHIFETTVAGRTLKGEFGKLGMLSDCALNISYGDTVVLVNVNASPEPKEGIDFFPLSIEYQERLYAVGKIPGGFIKREGRPSDKAILNARAIDRPLRPLFPKGYRNDVQVVCTVVSVDQDNLPNILAMNGASLALCLSSIPFTIPVGTVSVGLIDGEFIINPTSKQREESILDLTVCATKDRVMMIEAGGEEIPEDVMYDAIMFGFEECKKIADFQQKVMEQYGKQKAELILHEIDADIEKEVREFAFDMVKEAMYITDKDSRNKAMDEVKEKVSEEFDEKYPDNLGDIGEAIYKMQKEVVRNMILNEKRRPDGRYFDEIRPLSSEVSLLPRTHGSGLFTRGLTQVMSVATLGSISEGQVLDGIEEETSKRYMHHYNFPSYSVGEVRPLRGPNRREIGHGALAEKAIEPLIPSEQEFPYAIRVVSEVLSSNGSTSQASVCGSTLALLDAGVPMKRPAAGIAMGLVTSEDLEKEEILTDIQGLEDFFGDMDFKVAGTEKGITAIQVDTKIKGLSNDCIKKAITNARKARLTILEVINNCIDKPREEVSKYAPKVFTMSINPSKIKDVIGAGGKTINKIIDETGVKIDIKEDGSVFVTAEDYESGKKALAMIDGYSREVKEGEVYLGKVTKIANFGAFVEILPGKEGLVHISKLDVKRVNKVEDVVSVGDEILVKVTEIDSMGRVNLSRKDAIKDSENNQDKDTEK</sequence>
<organism>
    <name type="scientific">Clostridium novyi (strain NT)</name>
    <dbReference type="NCBI Taxonomy" id="386415"/>
    <lineage>
        <taxon>Bacteria</taxon>
        <taxon>Bacillati</taxon>
        <taxon>Bacillota</taxon>
        <taxon>Clostridia</taxon>
        <taxon>Eubacteriales</taxon>
        <taxon>Clostridiaceae</taxon>
        <taxon>Clostridium</taxon>
    </lineage>
</organism>
<name>PNP_CLONN</name>
<reference key="1">
    <citation type="journal article" date="2006" name="Nat. Biotechnol.">
        <title>The genome and transcriptomes of the anti-tumor agent Clostridium novyi-NT.</title>
        <authorList>
            <person name="Bettegowda C."/>
            <person name="Huang X."/>
            <person name="Lin J."/>
            <person name="Cheong I."/>
            <person name="Kohli M."/>
            <person name="Szabo S.A."/>
            <person name="Zhang X."/>
            <person name="Diaz L.A. Jr."/>
            <person name="Velculescu V.E."/>
            <person name="Parmigiani G."/>
            <person name="Kinzler K.W."/>
            <person name="Vogelstein B."/>
            <person name="Zhou S."/>
        </authorList>
    </citation>
    <scope>NUCLEOTIDE SEQUENCE [LARGE SCALE GENOMIC DNA]</scope>
    <source>
        <strain>NT</strain>
    </source>
</reference>
<proteinExistence type="inferred from homology"/>
<feature type="chain" id="PRO_0000329599" description="Polyribonucleotide nucleotidyltransferase">
    <location>
        <begin position="1"/>
        <end position="705"/>
    </location>
</feature>
<feature type="domain" description="KH" evidence="1">
    <location>
        <begin position="552"/>
        <end position="611"/>
    </location>
</feature>
<feature type="domain" description="S1 motif" evidence="1">
    <location>
        <begin position="621"/>
        <end position="689"/>
    </location>
</feature>
<feature type="binding site" evidence="1">
    <location>
        <position position="485"/>
    </location>
    <ligand>
        <name>Mg(2+)</name>
        <dbReference type="ChEBI" id="CHEBI:18420"/>
    </ligand>
</feature>
<feature type="binding site" evidence="1">
    <location>
        <position position="491"/>
    </location>
    <ligand>
        <name>Mg(2+)</name>
        <dbReference type="ChEBI" id="CHEBI:18420"/>
    </ligand>
</feature>
<gene>
    <name evidence="1" type="primary">pnp</name>
    <name type="ordered locus">NT01CX_2130</name>
</gene>
<comment type="function">
    <text evidence="1">Involved in mRNA degradation. Catalyzes the phosphorolysis of single-stranded polyribonucleotides processively in the 3'- to 5'-direction.</text>
</comment>
<comment type="catalytic activity">
    <reaction evidence="1">
        <text>RNA(n+1) + phosphate = RNA(n) + a ribonucleoside 5'-diphosphate</text>
        <dbReference type="Rhea" id="RHEA:22096"/>
        <dbReference type="Rhea" id="RHEA-COMP:14527"/>
        <dbReference type="Rhea" id="RHEA-COMP:17342"/>
        <dbReference type="ChEBI" id="CHEBI:43474"/>
        <dbReference type="ChEBI" id="CHEBI:57930"/>
        <dbReference type="ChEBI" id="CHEBI:140395"/>
        <dbReference type="EC" id="2.7.7.8"/>
    </reaction>
</comment>
<comment type="cofactor">
    <cofactor evidence="1">
        <name>Mg(2+)</name>
        <dbReference type="ChEBI" id="CHEBI:18420"/>
    </cofactor>
</comment>
<comment type="subcellular location">
    <subcellularLocation>
        <location evidence="1">Cytoplasm</location>
    </subcellularLocation>
</comment>
<comment type="similarity">
    <text evidence="1">Belongs to the polyribonucleotide nucleotidyltransferase family.</text>
</comment>